<protein>
    <recommendedName>
        <fullName evidence="1">Cyclic pyranopterin monophosphate synthase</fullName>
        <ecNumber evidence="1">4.6.1.17</ecNumber>
    </recommendedName>
    <alternativeName>
        <fullName evidence="1">Molybdenum cofactor biosynthesis protein C</fullName>
    </alternativeName>
</protein>
<name>MOAC_POLAQ</name>
<gene>
    <name evidence="1" type="primary">moaC</name>
    <name type="ordered locus">Pnuc_1824</name>
</gene>
<organism>
    <name type="scientific">Polynucleobacter asymbioticus (strain DSM 18221 / CIP 109841 / QLW-P1DMWA-1)</name>
    <name type="common">Polynucleobacter necessarius subsp. asymbioticus</name>
    <dbReference type="NCBI Taxonomy" id="312153"/>
    <lineage>
        <taxon>Bacteria</taxon>
        <taxon>Pseudomonadati</taxon>
        <taxon>Pseudomonadota</taxon>
        <taxon>Betaproteobacteria</taxon>
        <taxon>Burkholderiales</taxon>
        <taxon>Burkholderiaceae</taxon>
        <taxon>Polynucleobacter</taxon>
    </lineage>
</organism>
<reference key="1">
    <citation type="journal article" date="2012" name="Stand. Genomic Sci.">
        <title>Complete genome sequence of Polynucleobacter necessarius subsp. asymbioticus type strain (QLW-P1DMWA-1(T)).</title>
        <authorList>
            <person name="Meincke L."/>
            <person name="Copeland A."/>
            <person name="Lapidus A."/>
            <person name="Lucas S."/>
            <person name="Berry K.W."/>
            <person name="Del Rio T.G."/>
            <person name="Hammon N."/>
            <person name="Dalin E."/>
            <person name="Tice H."/>
            <person name="Pitluck S."/>
            <person name="Richardson P."/>
            <person name="Bruce D."/>
            <person name="Goodwin L."/>
            <person name="Han C."/>
            <person name="Tapia R."/>
            <person name="Detter J.C."/>
            <person name="Schmutz J."/>
            <person name="Brettin T."/>
            <person name="Larimer F."/>
            <person name="Land M."/>
            <person name="Hauser L."/>
            <person name="Kyrpides N.C."/>
            <person name="Ivanova N."/>
            <person name="Goker M."/>
            <person name="Woyke T."/>
            <person name="Wu Q.L."/>
            <person name="Pockl M."/>
            <person name="Hahn M.W."/>
            <person name="Klenk H.P."/>
        </authorList>
    </citation>
    <scope>NUCLEOTIDE SEQUENCE [LARGE SCALE GENOMIC DNA]</scope>
    <source>
        <strain>DSM 18221 / CIP 109841 / QLW-P1DMWA-1</strain>
    </source>
</reference>
<comment type="function">
    <text evidence="1">Catalyzes the conversion of (8S)-3',8-cyclo-7,8-dihydroguanosine 5'-triphosphate to cyclic pyranopterin monophosphate (cPMP).</text>
</comment>
<comment type="catalytic activity">
    <reaction evidence="1">
        <text>(8S)-3',8-cyclo-7,8-dihydroguanosine 5'-triphosphate = cyclic pyranopterin phosphate + diphosphate</text>
        <dbReference type="Rhea" id="RHEA:49580"/>
        <dbReference type="ChEBI" id="CHEBI:33019"/>
        <dbReference type="ChEBI" id="CHEBI:59648"/>
        <dbReference type="ChEBI" id="CHEBI:131766"/>
        <dbReference type="EC" id="4.6.1.17"/>
    </reaction>
</comment>
<comment type="pathway">
    <text evidence="1">Cofactor biosynthesis; molybdopterin biosynthesis.</text>
</comment>
<comment type="subunit">
    <text evidence="1">Homohexamer; trimer of dimers.</text>
</comment>
<comment type="similarity">
    <text evidence="1">Belongs to the MoaC family.</text>
</comment>
<sequence>MNKLTHFDDSGQAHMVNVGDKPATHRIAIATGKITMLLETFKMVETGNHKKGDVLGIARIAGIQASKRTADLIPLCHPLALTHVSLEFRLDSTTSTISCKVRAETTGPTGVEMEALTAVQVALLTIYDMCKAVDRGMVMGDIKLLEKSGGKSGEWKLA</sequence>
<evidence type="ECO:0000255" key="1">
    <source>
        <dbReference type="HAMAP-Rule" id="MF_01224"/>
    </source>
</evidence>
<dbReference type="EC" id="4.6.1.17" evidence="1"/>
<dbReference type="EMBL" id="CP000655">
    <property type="protein sequence ID" value="ABP35037.1"/>
    <property type="molecule type" value="Genomic_DNA"/>
</dbReference>
<dbReference type="RefSeq" id="WP_011903660.1">
    <property type="nucleotide sequence ID" value="NC_009379.1"/>
</dbReference>
<dbReference type="SMR" id="A4SZX3"/>
<dbReference type="GeneID" id="31482213"/>
<dbReference type="KEGG" id="pnu:Pnuc_1824"/>
<dbReference type="eggNOG" id="COG0315">
    <property type="taxonomic scope" value="Bacteria"/>
</dbReference>
<dbReference type="HOGENOM" id="CLU_074693_1_1_4"/>
<dbReference type="UniPathway" id="UPA00344"/>
<dbReference type="Proteomes" id="UP000000231">
    <property type="component" value="Chromosome"/>
</dbReference>
<dbReference type="GO" id="GO:0061799">
    <property type="term" value="F:cyclic pyranopterin monophosphate synthase activity"/>
    <property type="evidence" value="ECO:0007669"/>
    <property type="project" value="UniProtKB-UniRule"/>
</dbReference>
<dbReference type="GO" id="GO:0006777">
    <property type="term" value="P:Mo-molybdopterin cofactor biosynthetic process"/>
    <property type="evidence" value="ECO:0007669"/>
    <property type="project" value="UniProtKB-UniRule"/>
</dbReference>
<dbReference type="CDD" id="cd01420">
    <property type="entry name" value="MoaC_PE"/>
    <property type="match status" value="1"/>
</dbReference>
<dbReference type="Gene3D" id="3.30.70.640">
    <property type="entry name" value="Molybdopterin cofactor biosynthesis C (MoaC) domain"/>
    <property type="match status" value="1"/>
</dbReference>
<dbReference type="HAMAP" id="MF_01224_B">
    <property type="entry name" value="MoaC_B"/>
    <property type="match status" value="1"/>
</dbReference>
<dbReference type="InterPro" id="IPR023045">
    <property type="entry name" value="MoaC"/>
</dbReference>
<dbReference type="InterPro" id="IPR047594">
    <property type="entry name" value="MoaC_bact/euk"/>
</dbReference>
<dbReference type="InterPro" id="IPR036522">
    <property type="entry name" value="MoaC_sf"/>
</dbReference>
<dbReference type="InterPro" id="IPR050105">
    <property type="entry name" value="MoCo_biosynth_MoaA/MoaC"/>
</dbReference>
<dbReference type="InterPro" id="IPR002820">
    <property type="entry name" value="Mopterin_CF_biosynth-C_dom"/>
</dbReference>
<dbReference type="NCBIfam" id="TIGR00581">
    <property type="entry name" value="moaC"/>
    <property type="match status" value="1"/>
</dbReference>
<dbReference type="NCBIfam" id="NF006870">
    <property type="entry name" value="PRK09364.1"/>
    <property type="match status" value="1"/>
</dbReference>
<dbReference type="PANTHER" id="PTHR22960:SF29">
    <property type="entry name" value="CYCLIC PYRANOPTERIN MONOPHOSPHATE SYNTHASE"/>
    <property type="match status" value="1"/>
</dbReference>
<dbReference type="PANTHER" id="PTHR22960">
    <property type="entry name" value="MOLYBDOPTERIN COFACTOR SYNTHESIS PROTEIN A"/>
    <property type="match status" value="1"/>
</dbReference>
<dbReference type="Pfam" id="PF01967">
    <property type="entry name" value="MoaC"/>
    <property type="match status" value="1"/>
</dbReference>
<dbReference type="SUPFAM" id="SSF55040">
    <property type="entry name" value="Molybdenum cofactor biosynthesis protein C, MoaC"/>
    <property type="match status" value="1"/>
</dbReference>
<feature type="chain" id="PRO_1000085680" description="Cyclic pyranopterin monophosphate synthase">
    <location>
        <begin position="1"/>
        <end position="158"/>
    </location>
</feature>
<feature type="active site" evidence="1">
    <location>
        <position position="128"/>
    </location>
</feature>
<feature type="binding site" evidence="1">
    <location>
        <begin position="75"/>
        <end position="77"/>
    </location>
    <ligand>
        <name>substrate</name>
    </ligand>
</feature>
<feature type="binding site" evidence="1">
    <location>
        <begin position="113"/>
        <end position="114"/>
    </location>
    <ligand>
        <name>substrate</name>
    </ligand>
</feature>
<keyword id="KW-0456">Lyase</keyword>
<keyword id="KW-0501">Molybdenum cofactor biosynthesis</keyword>
<keyword id="KW-1185">Reference proteome</keyword>
<proteinExistence type="inferred from homology"/>
<accession>A4SZX3</accession>